<protein>
    <recommendedName>
        <fullName evidence="1">NADH-quinone oxidoreductase subunit D</fullName>
        <ecNumber evidence="1">7.1.1.-</ecNumber>
    </recommendedName>
    <alternativeName>
        <fullName evidence="1">NADH dehydrogenase I subunit D</fullName>
    </alternativeName>
    <alternativeName>
        <fullName evidence="1">NDH-1 subunit D</fullName>
    </alternativeName>
</protein>
<evidence type="ECO:0000255" key="1">
    <source>
        <dbReference type="HAMAP-Rule" id="MF_01358"/>
    </source>
</evidence>
<comment type="function">
    <text evidence="1">NDH-1 shuttles electrons from NADH, via FMN and iron-sulfur (Fe-S) centers, to quinones in the respiratory chain. The immediate electron acceptor for the enzyme in this species is believed to be ubiquinone. Couples the redox reaction to proton translocation (for every two electrons transferred, four hydrogen ions are translocated across the cytoplasmic membrane), and thus conserves the redox energy in a proton gradient.</text>
</comment>
<comment type="catalytic activity">
    <reaction evidence="1">
        <text>a quinone + NADH + 5 H(+)(in) = a quinol + NAD(+) + 4 H(+)(out)</text>
        <dbReference type="Rhea" id="RHEA:57888"/>
        <dbReference type="ChEBI" id="CHEBI:15378"/>
        <dbReference type="ChEBI" id="CHEBI:24646"/>
        <dbReference type="ChEBI" id="CHEBI:57540"/>
        <dbReference type="ChEBI" id="CHEBI:57945"/>
        <dbReference type="ChEBI" id="CHEBI:132124"/>
    </reaction>
</comment>
<comment type="subunit">
    <text evidence="1">NDH-1 is composed of 14 different subunits. Subunits NuoB, C, D, E, F, and G constitute the peripheral sector of the complex.</text>
</comment>
<comment type="subcellular location">
    <subcellularLocation>
        <location evidence="1">Cell inner membrane</location>
        <topology evidence="1">Peripheral membrane protein</topology>
        <orientation evidence="1">Cytoplasmic side</orientation>
    </subcellularLocation>
</comment>
<comment type="similarity">
    <text evidence="1">Belongs to the complex I 49 kDa subunit family.</text>
</comment>
<keyword id="KW-0997">Cell inner membrane</keyword>
<keyword id="KW-1003">Cell membrane</keyword>
<keyword id="KW-0472">Membrane</keyword>
<keyword id="KW-0520">NAD</keyword>
<keyword id="KW-0874">Quinone</keyword>
<keyword id="KW-1185">Reference proteome</keyword>
<keyword id="KW-1278">Translocase</keyword>
<keyword id="KW-0813">Transport</keyword>
<keyword id="KW-0830">Ubiquinone</keyword>
<dbReference type="EC" id="7.1.1.-" evidence="1"/>
<dbReference type="EMBL" id="CP000494">
    <property type="protein sequence ID" value="ABQ36591.1"/>
    <property type="molecule type" value="Genomic_DNA"/>
</dbReference>
<dbReference type="RefSeq" id="WP_012044586.1">
    <property type="nucleotide sequence ID" value="NC_009485.1"/>
</dbReference>
<dbReference type="SMR" id="A5EK97"/>
<dbReference type="STRING" id="288000.BBta_4560"/>
<dbReference type="KEGG" id="bbt:BBta_4560"/>
<dbReference type="eggNOG" id="COG0649">
    <property type="taxonomic scope" value="Bacteria"/>
</dbReference>
<dbReference type="HOGENOM" id="CLU_015134_1_1_5"/>
<dbReference type="OrthoDB" id="9801496at2"/>
<dbReference type="Proteomes" id="UP000000246">
    <property type="component" value="Chromosome"/>
</dbReference>
<dbReference type="GO" id="GO:0005886">
    <property type="term" value="C:plasma membrane"/>
    <property type="evidence" value="ECO:0007669"/>
    <property type="project" value="UniProtKB-SubCell"/>
</dbReference>
<dbReference type="GO" id="GO:0051287">
    <property type="term" value="F:NAD binding"/>
    <property type="evidence" value="ECO:0007669"/>
    <property type="project" value="InterPro"/>
</dbReference>
<dbReference type="GO" id="GO:0050136">
    <property type="term" value="F:NADH:ubiquinone reductase (non-electrogenic) activity"/>
    <property type="evidence" value="ECO:0007669"/>
    <property type="project" value="UniProtKB-UniRule"/>
</dbReference>
<dbReference type="GO" id="GO:0048038">
    <property type="term" value="F:quinone binding"/>
    <property type="evidence" value="ECO:0007669"/>
    <property type="project" value="UniProtKB-KW"/>
</dbReference>
<dbReference type="FunFam" id="1.10.645.10:FF:000005">
    <property type="entry name" value="NADH-quinone oxidoreductase subunit D"/>
    <property type="match status" value="1"/>
</dbReference>
<dbReference type="Gene3D" id="1.10.645.10">
    <property type="entry name" value="Cytochrome-c3 Hydrogenase, chain B"/>
    <property type="match status" value="1"/>
</dbReference>
<dbReference type="HAMAP" id="MF_01358">
    <property type="entry name" value="NDH1_NuoD"/>
    <property type="match status" value="1"/>
</dbReference>
<dbReference type="InterPro" id="IPR001135">
    <property type="entry name" value="NADH_Q_OxRdtase_suD"/>
</dbReference>
<dbReference type="InterPro" id="IPR014029">
    <property type="entry name" value="NADH_UbQ_OxRdtase_49kDa_CS"/>
</dbReference>
<dbReference type="InterPro" id="IPR022885">
    <property type="entry name" value="NDH1_su_D/H"/>
</dbReference>
<dbReference type="InterPro" id="IPR029014">
    <property type="entry name" value="NiFe-Hase_large"/>
</dbReference>
<dbReference type="NCBIfam" id="TIGR01962">
    <property type="entry name" value="NuoD"/>
    <property type="match status" value="1"/>
</dbReference>
<dbReference type="NCBIfam" id="NF004739">
    <property type="entry name" value="PRK06075.1"/>
    <property type="match status" value="1"/>
</dbReference>
<dbReference type="PANTHER" id="PTHR11993:SF10">
    <property type="entry name" value="NADH DEHYDROGENASE [UBIQUINONE] IRON-SULFUR PROTEIN 2, MITOCHONDRIAL"/>
    <property type="match status" value="1"/>
</dbReference>
<dbReference type="PANTHER" id="PTHR11993">
    <property type="entry name" value="NADH-UBIQUINONE OXIDOREDUCTASE 49 KDA SUBUNIT"/>
    <property type="match status" value="1"/>
</dbReference>
<dbReference type="Pfam" id="PF00346">
    <property type="entry name" value="Complex1_49kDa"/>
    <property type="match status" value="1"/>
</dbReference>
<dbReference type="SUPFAM" id="SSF56762">
    <property type="entry name" value="HydB/Nqo4-like"/>
    <property type="match status" value="1"/>
</dbReference>
<dbReference type="PROSITE" id="PS00535">
    <property type="entry name" value="COMPLEX1_49K"/>
    <property type="match status" value="1"/>
</dbReference>
<name>NUOD_BRASB</name>
<organism>
    <name type="scientific">Bradyrhizobium sp. (strain BTAi1 / ATCC BAA-1182)</name>
    <dbReference type="NCBI Taxonomy" id="288000"/>
    <lineage>
        <taxon>Bacteria</taxon>
        <taxon>Pseudomonadati</taxon>
        <taxon>Pseudomonadota</taxon>
        <taxon>Alphaproteobacteria</taxon>
        <taxon>Hyphomicrobiales</taxon>
        <taxon>Nitrobacteraceae</taxon>
        <taxon>Bradyrhizobium</taxon>
    </lineage>
</organism>
<gene>
    <name evidence="1" type="primary">nuoD</name>
    <name type="ordered locus">BBta_4560</name>
</gene>
<proteinExistence type="inferred from homology"/>
<sequence length="398" mass="44978">MNEQSPALRNFTINFGPQHPAAHGVLRLVLELDGEVVERVDPHIGLLHRGTEKLIETKTYLQAMPYFDRLDYVAPMNQEHAFCLAAERLLGIEVPRRGQLIRVLYSEIGRLLSHLLNVTTQAMDVGALTPPLWGFEEREKLMVFYERASGSRMHANYFRIGGVHQDLPPKLIDDIDAFCDPFLKVVDDLDQLLTGNRIFKQRNVDIGVVTLKQAWEWGFSGVMVRGSGAAWDLRKSQPYDVYAEMEFDVPIGKNGDCYDRYLIRMEEMRQSVRIMKQCIQKLRAPDGQGPVVVTDNKIAPPRRGEMKRSMEALIHHFKLYTEGVHVPAGEIYAAVEAPKGEFGVYLVSDGSNKPYKCKIRAPGFAHLQAMDFLCRGHLLADVSAILGSLDIVFGEVDR</sequence>
<reference key="1">
    <citation type="journal article" date="2007" name="Science">
        <title>Legumes symbioses: absence of nod genes in photosynthetic bradyrhizobia.</title>
        <authorList>
            <person name="Giraud E."/>
            <person name="Moulin L."/>
            <person name="Vallenet D."/>
            <person name="Barbe V."/>
            <person name="Cytryn E."/>
            <person name="Avarre J.-C."/>
            <person name="Jaubert M."/>
            <person name="Simon D."/>
            <person name="Cartieaux F."/>
            <person name="Prin Y."/>
            <person name="Bena G."/>
            <person name="Hannibal L."/>
            <person name="Fardoux J."/>
            <person name="Kojadinovic M."/>
            <person name="Vuillet L."/>
            <person name="Lajus A."/>
            <person name="Cruveiller S."/>
            <person name="Rouy Z."/>
            <person name="Mangenot S."/>
            <person name="Segurens B."/>
            <person name="Dossat C."/>
            <person name="Franck W.L."/>
            <person name="Chang W.-S."/>
            <person name="Saunders E."/>
            <person name="Bruce D."/>
            <person name="Richardson P."/>
            <person name="Normand P."/>
            <person name="Dreyfus B."/>
            <person name="Pignol D."/>
            <person name="Stacey G."/>
            <person name="Emerich D."/>
            <person name="Vermeglio A."/>
            <person name="Medigue C."/>
            <person name="Sadowsky M."/>
        </authorList>
    </citation>
    <scope>NUCLEOTIDE SEQUENCE [LARGE SCALE GENOMIC DNA]</scope>
    <source>
        <strain>BTAi1 / ATCC BAA-1182</strain>
    </source>
</reference>
<feature type="chain" id="PRO_0000357780" description="NADH-quinone oxidoreductase subunit D">
    <location>
        <begin position="1"/>
        <end position="398"/>
    </location>
</feature>
<accession>A5EK97</accession>